<name>Y010_MYCGE</name>
<gene>
    <name type="ordered locus">MG010</name>
</gene>
<organism>
    <name type="scientific">Mycoplasma genitalium (strain ATCC 33530 / DSM 19775 / NCTC 10195 / G37)</name>
    <name type="common">Mycoplasmoides genitalium</name>
    <dbReference type="NCBI Taxonomy" id="243273"/>
    <lineage>
        <taxon>Bacteria</taxon>
        <taxon>Bacillati</taxon>
        <taxon>Mycoplasmatota</taxon>
        <taxon>Mycoplasmoidales</taxon>
        <taxon>Mycoplasmoidaceae</taxon>
        <taxon>Mycoplasmoides</taxon>
    </lineage>
</organism>
<sequence length="218" mass="25280">MDVRTERLNELFFVYHKNLKNQSKSKYSRAVNYLKRRGFNLQDFLKVGGGVGYLQNKEWLNLPLYSFDGNLIGFLNRKVSYKKEFLYTPFNKPPSKSEAFVGLRELVIKDNSIYLVEGDFDWLAFRKAGILNSLPLCGLTISNQQVQWLKQKKIKKIFICFDNDLAGKNGAKNLKEYLTKQGFITKVIEIKAAAKDWNDLFLLNNSNWSAVLTNQLLF</sequence>
<evidence type="ECO:0000255" key="1">
    <source>
        <dbReference type="PROSITE-ProRule" id="PRU00995"/>
    </source>
</evidence>
<keyword id="KW-1185">Reference proteome</keyword>
<accession>P47256</accession>
<dbReference type="EMBL" id="L43967">
    <property type="protein sequence ID" value="AAC71226.1"/>
    <property type="molecule type" value="Genomic_DNA"/>
</dbReference>
<dbReference type="PIR" id="A64201">
    <property type="entry name" value="A64201"/>
</dbReference>
<dbReference type="RefSeq" id="WP_010869288.1">
    <property type="nucleotide sequence ID" value="NC_000908.2"/>
</dbReference>
<dbReference type="SMR" id="P47256"/>
<dbReference type="STRING" id="243273.MG_010"/>
<dbReference type="GeneID" id="88282125"/>
<dbReference type="KEGG" id="mge:MG_010"/>
<dbReference type="eggNOG" id="COG0358">
    <property type="taxonomic scope" value="Bacteria"/>
</dbReference>
<dbReference type="HOGENOM" id="CLU_1265786_0_0_14"/>
<dbReference type="InParanoid" id="P47256"/>
<dbReference type="OrthoDB" id="9803773at2"/>
<dbReference type="BioCyc" id="MGEN243273:G1GJ2-10-MONOMER"/>
<dbReference type="Proteomes" id="UP000000807">
    <property type="component" value="Chromosome"/>
</dbReference>
<dbReference type="CDD" id="cd03364">
    <property type="entry name" value="TOPRIM_DnaG_primases"/>
    <property type="match status" value="1"/>
</dbReference>
<dbReference type="FunFam" id="3.40.1360.10:FF:000028">
    <property type="entry name" value="DNA primase DnaG"/>
    <property type="match status" value="1"/>
</dbReference>
<dbReference type="Gene3D" id="3.40.1360.10">
    <property type="match status" value="1"/>
</dbReference>
<dbReference type="InterPro" id="IPR004611">
    <property type="entry name" value="DNA_primase-rel"/>
</dbReference>
<dbReference type="InterPro" id="IPR050219">
    <property type="entry name" value="DnaG_primase"/>
</dbReference>
<dbReference type="InterPro" id="IPR034151">
    <property type="entry name" value="TOPRIM_DnaG_bac"/>
</dbReference>
<dbReference type="InterPro" id="IPR006171">
    <property type="entry name" value="TOPRIM_dom"/>
</dbReference>
<dbReference type="NCBIfam" id="TIGR00646">
    <property type="entry name" value="MG010"/>
    <property type="match status" value="1"/>
</dbReference>
<dbReference type="PANTHER" id="PTHR30313">
    <property type="entry name" value="DNA PRIMASE"/>
    <property type="match status" value="1"/>
</dbReference>
<dbReference type="PANTHER" id="PTHR30313:SF2">
    <property type="entry name" value="DNA PRIMASE"/>
    <property type="match status" value="1"/>
</dbReference>
<dbReference type="Pfam" id="PF13155">
    <property type="entry name" value="Toprim_2"/>
    <property type="match status" value="1"/>
</dbReference>
<dbReference type="SMART" id="SM00493">
    <property type="entry name" value="TOPRIM"/>
    <property type="match status" value="1"/>
</dbReference>
<dbReference type="SUPFAM" id="SSF56731">
    <property type="entry name" value="DNA primase core"/>
    <property type="match status" value="1"/>
</dbReference>
<dbReference type="PROSITE" id="PS50880">
    <property type="entry name" value="TOPRIM"/>
    <property type="match status" value="1"/>
</dbReference>
<feature type="chain" id="PRO_0000180534" description="Uncharacterized protein MG010">
    <location>
        <begin position="1"/>
        <end position="218"/>
    </location>
</feature>
<feature type="domain" description="Toprim" evidence="1">
    <location>
        <begin position="111"/>
        <end position="193"/>
    </location>
</feature>
<proteinExistence type="predicted"/>
<protein>
    <recommendedName>
        <fullName>Uncharacterized protein MG010</fullName>
    </recommendedName>
</protein>
<reference key="1">
    <citation type="journal article" date="1995" name="Science">
        <title>The minimal gene complement of Mycoplasma genitalium.</title>
        <authorList>
            <person name="Fraser C.M."/>
            <person name="Gocayne J.D."/>
            <person name="White O."/>
            <person name="Adams M.D."/>
            <person name="Clayton R.A."/>
            <person name="Fleischmann R.D."/>
            <person name="Bult C.J."/>
            <person name="Kerlavage A.R."/>
            <person name="Sutton G.G."/>
            <person name="Kelley J.M."/>
            <person name="Fritchman J.L."/>
            <person name="Weidman J.F."/>
            <person name="Small K.V."/>
            <person name="Sandusky M."/>
            <person name="Fuhrmann J.L."/>
            <person name="Nguyen D.T."/>
            <person name="Utterback T.R."/>
            <person name="Saudek D.M."/>
            <person name="Phillips C.A."/>
            <person name="Merrick J.M."/>
            <person name="Tomb J.-F."/>
            <person name="Dougherty B.A."/>
            <person name="Bott K.F."/>
            <person name="Hu P.-C."/>
            <person name="Lucier T.S."/>
            <person name="Peterson S.N."/>
            <person name="Smith H.O."/>
            <person name="Hutchison C.A. III"/>
            <person name="Venter J.C."/>
        </authorList>
    </citation>
    <scope>NUCLEOTIDE SEQUENCE [LARGE SCALE GENOMIC DNA]</scope>
    <source>
        <strain>ATCC 33530 / DSM 19775 / NCTC 10195 / G37</strain>
    </source>
</reference>